<keyword id="KW-0489">Methyltransferase</keyword>
<keyword id="KW-0496">Mitochondrion</keyword>
<keyword id="KW-1185">Reference proteome</keyword>
<keyword id="KW-0694">RNA-binding</keyword>
<keyword id="KW-0698">rRNA processing</keyword>
<keyword id="KW-0949">S-adenosyl-L-methionine</keyword>
<keyword id="KW-0808">Transferase</keyword>
<keyword id="KW-0809">Transit peptide</keyword>
<name>TFB1M_DROPS</name>
<protein>
    <recommendedName>
        <fullName>Dimethyladenosine transferase 1, mitochondrial</fullName>
        <ecNumber>2.1.1.-</ecNumber>
    </recommendedName>
    <alternativeName>
        <fullName>Mitochondrial 12S rRNA dimethylase 1</fullName>
    </alternativeName>
    <alternativeName>
        <fullName>Mitochondrial transcription factor B1</fullName>
    </alternativeName>
    <alternativeName>
        <fullName>S-adenosylmethionine-6-N', N'-adenosyl(rRNA) dimethyltransferase 1</fullName>
    </alternativeName>
</protein>
<evidence type="ECO:0000250" key="1"/>
<evidence type="ECO:0000255" key="2"/>
<evidence type="ECO:0000255" key="3">
    <source>
        <dbReference type="PROSITE-ProRule" id="PRU01026"/>
    </source>
</evidence>
<reference key="1">
    <citation type="journal article" date="2005" name="Genome Res.">
        <title>Comparative genome sequencing of Drosophila pseudoobscura: chromosomal, gene, and cis-element evolution.</title>
        <authorList>
            <person name="Richards S."/>
            <person name="Liu Y."/>
            <person name="Bettencourt B.R."/>
            <person name="Hradecky P."/>
            <person name="Letovsky S."/>
            <person name="Nielsen R."/>
            <person name="Thornton K."/>
            <person name="Hubisz M.J."/>
            <person name="Chen R."/>
            <person name="Meisel R.P."/>
            <person name="Couronne O."/>
            <person name="Hua S."/>
            <person name="Smith M.A."/>
            <person name="Zhang P."/>
            <person name="Liu J."/>
            <person name="Bussemaker H.J."/>
            <person name="van Batenburg M.F."/>
            <person name="Howells S.L."/>
            <person name="Scherer S.E."/>
            <person name="Sodergren E."/>
            <person name="Matthews B.B."/>
            <person name="Crosby M.A."/>
            <person name="Schroeder A.J."/>
            <person name="Ortiz-Barrientos D."/>
            <person name="Rives C.M."/>
            <person name="Metzker M.L."/>
            <person name="Muzny D.M."/>
            <person name="Scott G."/>
            <person name="Steffen D."/>
            <person name="Wheeler D.A."/>
            <person name="Worley K.C."/>
            <person name="Havlak P."/>
            <person name="Durbin K.J."/>
            <person name="Egan A."/>
            <person name="Gill R."/>
            <person name="Hume J."/>
            <person name="Morgan M.B."/>
            <person name="Miner G."/>
            <person name="Hamilton C."/>
            <person name="Huang Y."/>
            <person name="Waldron L."/>
            <person name="Verduzco D."/>
            <person name="Clerc-Blankenburg K.P."/>
            <person name="Dubchak I."/>
            <person name="Noor M.A.F."/>
            <person name="Anderson W."/>
            <person name="White K.P."/>
            <person name="Clark A.G."/>
            <person name="Schaeffer S.W."/>
            <person name="Gelbart W.M."/>
            <person name="Weinstock G.M."/>
            <person name="Gibbs R.A."/>
        </authorList>
    </citation>
    <scope>NUCLEOTIDE SEQUENCE [LARGE SCALE GENOMIC DNA]</scope>
    <source>
        <strain>MV2-25 / Tucson 14011-0121.94</strain>
    </source>
</reference>
<gene>
    <name type="primary">mtTFB1</name>
    <name type="ORF">GA20255</name>
</gene>
<feature type="transit peptide" description="Mitochondrion" evidence="2">
    <location>
        <begin position="1"/>
        <end position="84"/>
    </location>
</feature>
<feature type="chain" id="PRO_0000273184" description="Dimethyladenosine transferase 1, mitochondrial">
    <location>
        <begin position="85"/>
        <end position="337"/>
    </location>
</feature>
<feature type="binding site" evidence="1">
    <location>
        <begin position="38"/>
        <end position="41"/>
    </location>
    <ligand>
        <name>S-adenosyl-L-methionine</name>
        <dbReference type="ChEBI" id="CHEBI:59789"/>
    </ligand>
</feature>
<feature type="binding site" evidence="3">
    <location>
        <position position="39"/>
    </location>
    <ligand>
        <name>S-adenosyl-L-methionine</name>
        <dbReference type="ChEBI" id="CHEBI:59789"/>
    </ligand>
</feature>
<feature type="binding site" evidence="3">
    <location>
        <position position="41"/>
    </location>
    <ligand>
        <name>S-adenosyl-L-methionine</name>
        <dbReference type="ChEBI" id="CHEBI:59789"/>
    </ligand>
</feature>
<feature type="binding site" evidence="3">
    <location>
        <position position="67"/>
    </location>
    <ligand>
        <name>S-adenosyl-L-methionine</name>
        <dbReference type="ChEBI" id="CHEBI:59789"/>
    </ligand>
</feature>
<feature type="binding site" evidence="3">
    <location>
        <position position="89"/>
    </location>
    <ligand>
        <name>S-adenosyl-L-methionine</name>
        <dbReference type="ChEBI" id="CHEBI:59789"/>
    </ligand>
</feature>
<feature type="binding site" evidence="3">
    <location>
        <position position="118"/>
    </location>
    <ligand>
        <name>S-adenosyl-L-methionine</name>
        <dbReference type="ChEBI" id="CHEBI:59789"/>
    </ligand>
</feature>
<feature type="binding site" evidence="3">
    <location>
        <position position="140"/>
    </location>
    <ligand>
        <name>S-adenosyl-L-methionine</name>
        <dbReference type="ChEBI" id="CHEBI:59789"/>
    </ligand>
</feature>
<comment type="function">
    <text evidence="1">Probable S-adenosyl-L-methionine-dependent methyltransferase which specifically dimethylates mitochondrial 12S rRNA at the conserved stem loop.</text>
</comment>
<comment type="subcellular location">
    <subcellularLocation>
        <location evidence="1">Mitochondrion</location>
    </subcellularLocation>
</comment>
<comment type="similarity">
    <text evidence="3">Belongs to the class I-like SAM-binding methyltransferase superfamily. rRNA adenine N(6)-methyltransferase family. KsgA subfamily.</text>
</comment>
<proteinExistence type="inferred from homology"/>
<dbReference type="EC" id="2.1.1.-"/>
<dbReference type="EMBL" id="CH379069">
    <property type="protein sequence ID" value="EAL29629.2"/>
    <property type="molecule type" value="Genomic_DNA"/>
</dbReference>
<dbReference type="RefSeq" id="XP_001353894.2">
    <property type="nucleotide sequence ID" value="XM_001353858.3"/>
</dbReference>
<dbReference type="SMR" id="Q2LZ79"/>
<dbReference type="FunCoup" id="Q2LZ79">
    <property type="interactions" value="428"/>
</dbReference>
<dbReference type="STRING" id="46245.Q2LZ79"/>
<dbReference type="EnsemblMetazoa" id="FBtr0275748">
    <property type="protein sequence ID" value="FBpp0274186"/>
    <property type="gene ID" value="FBgn0080250"/>
</dbReference>
<dbReference type="KEGG" id="dpo:4813779"/>
<dbReference type="CTD" id="39320"/>
<dbReference type="eggNOG" id="KOG0821">
    <property type="taxonomic scope" value="Eukaryota"/>
</dbReference>
<dbReference type="HOGENOM" id="CLU_041220_7_0_1"/>
<dbReference type="InParanoid" id="Q2LZ79"/>
<dbReference type="OMA" id="RIEQPFK"/>
<dbReference type="Proteomes" id="UP000001819">
    <property type="component" value="Chromosome X"/>
</dbReference>
<dbReference type="Bgee" id="FBgn0080250">
    <property type="expression patterns" value="Expressed in female reproductive system and 2 other cell types or tissues"/>
</dbReference>
<dbReference type="GO" id="GO:0005759">
    <property type="term" value="C:mitochondrial matrix"/>
    <property type="evidence" value="ECO:0000250"/>
    <property type="project" value="UniProtKB"/>
</dbReference>
<dbReference type="GO" id="GO:0034246">
    <property type="term" value="F:mitochondrial transcription factor activity"/>
    <property type="evidence" value="ECO:0000250"/>
    <property type="project" value="UniProtKB"/>
</dbReference>
<dbReference type="GO" id="GO:0003723">
    <property type="term" value="F:RNA binding"/>
    <property type="evidence" value="ECO:0007669"/>
    <property type="project" value="UniProtKB-KW"/>
</dbReference>
<dbReference type="GO" id="GO:0000179">
    <property type="term" value="F:rRNA (adenine-N6,N6-)-dimethyltransferase activity"/>
    <property type="evidence" value="ECO:0007669"/>
    <property type="project" value="InterPro"/>
</dbReference>
<dbReference type="GO" id="GO:0006390">
    <property type="term" value="P:mitochondrial transcription"/>
    <property type="evidence" value="ECO:0000250"/>
    <property type="project" value="UniProtKB"/>
</dbReference>
<dbReference type="GO" id="GO:0006391">
    <property type="term" value="P:transcription initiation at mitochondrial promoter"/>
    <property type="evidence" value="ECO:0007669"/>
    <property type="project" value="TreeGrafter"/>
</dbReference>
<dbReference type="FunFam" id="1.10.8.100:FF:000006">
    <property type="entry name" value="rRNA adenine N(6)-methyltransferase"/>
    <property type="match status" value="1"/>
</dbReference>
<dbReference type="FunFam" id="3.40.50.150:FF:000485">
    <property type="entry name" value="rRNA adenine N(6)-methyltransferase"/>
    <property type="match status" value="1"/>
</dbReference>
<dbReference type="Gene3D" id="1.10.8.100">
    <property type="entry name" value="Ribosomal RNA adenine dimethylase-like, domain 2"/>
    <property type="match status" value="1"/>
</dbReference>
<dbReference type="Gene3D" id="3.40.50.150">
    <property type="entry name" value="Vaccinia Virus protein VP39"/>
    <property type="match status" value="1"/>
</dbReference>
<dbReference type="InterPro" id="IPR001737">
    <property type="entry name" value="KsgA/Erm"/>
</dbReference>
<dbReference type="InterPro" id="IPR023165">
    <property type="entry name" value="rRNA_Ade_diMease-like_C"/>
</dbReference>
<dbReference type="InterPro" id="IPR020596">
    <property type="entry name" value="rRNA_Ade_Mease_Trfase_CS"/>
</dbReference>
<dbReference type="InterPro" id="IPR020598">
    <property type="entry name" value="rRNA_Ade_methylase_Trfase_N"/>
</dbReference>
<dbReference type="InterPro" id="IPR011530">
    <property type="entry name" value="rRNA_adenine_dimethylase"/>
</dbReference>
<dbReference type="InterPro" id="IPR029063">
    <property type="entry name" value="SAM-dependent_MTases_sf"/>
</dbReference>
<dbReference type="NCBIfam" id="TIGR00755">
    <property type="entry name" value="ksgA"/>
    <property type="match status" value="1"/>
</dbReference>
<dbReference type="PANTHER" id="PTHR11727">
    <property type="entry name" value="DIMETHYLADENOSINE TRANSFERASE"/>
    <property type="match status" value="1"/>
</dbReference>
<dbReference type="PANTHER" id="PTHR11727:SF17">
    <property type="entry name" value="DIMETHYLADENOSINE TRANSFERASE 1, MITOCHONDRIAL"/>
    <property type="match status" value="1"/>
</dbReference>
<dbReference type="Pfam" id="PF00398">
    <property type="entry name" value="RrnaAD"/>
    <property type="match status" value="1"/>
</dbReference>
<dbReference type="SMART" id="SM00650">
    <property type="entry name" value="rADc"/>
    <property type="match status" value="1"/>
</dbReference>
<dbReference type="SUPFAM" id="SSF53335">
    <property type="entry name" value="S-adenosyl-L-methionine-dependent methyltransferases"/>
    <property type="match status" value="1"/>
</dbReference>
<dbReference type="PROSITE" id="PS01131">
    <property type="entry name" value="RRNA_A_DIMETH"/>
    <property type="match status" value="1"/>
</dbReference>
<dbReference type="PROSITE" id="PS51689">
    <property type="entry name" value="SAM_RNA_A_N6_MT"/>
    <property type="match status" value="1"/>
</dbReference>
<accession>Q2LZ79</accession>
<organism>
    <name type="scientific">Drosophila pseudoobscura pseudoobscura</name>
    <name type="common">Fruit fly</name>
    <dbReference type="NCBI Taxonomy" id="46245"/>
    <lineage>
        <taxon>Eukaryota</taxon>
        <taxon>Metazoa</taxon>
        <taxon>Ecdysozoa</taxon>
        <taxon>Arthropoda</taxon>
        <taxon>Hexapoda</taxon>
        <taxon>Insecta</taxon>
        <taxon>Pterygota</taxon>
        <taxon>Neoptera</taxon>
        <taxon>Endopterygota</taxon>
        <taxon>Diptera</taxon>
        <taxon>Brachycera</taxon>
        <taxon>Muscomorpha</taxon>
        <taxon>Ephydroidea</taxon>
        <taxon>Drosophilidae</taxon>
        <taxon>Drosophila</taxon>
        <taxon>Sophophora</taxon>
    </lineage>
</organism>
<sequence length="337" mass="38581">MSQVTARVLNSGMRLPPLPTIRELVKLYKLQAMKQLSQNFLMDERLTDKIVKSAGRIDPRDIVLEVGPGPGGITRSILRRQPQRLILVEKDRRFGETLQLLRECASPLDMQVDIYYDDILRFNIEQHIPDTTQRIHLIGNLPFSISTRLLINWYADLAARRGAFRRNDTCMTLTFQKEVAERICAPVGSEQRCRLSVMSQIWTEPVMKFIIPGKAFVPKPQVDVGVVKLIPLKQPKTQLPFSLVERVVRHIFSMRQKYCRRGYGTLLPPDSREETTQTLFQRADVRDTLRSFELSVPQCLRLADAYAEYIKEHPEVEAYDYRGPKNPDVSGAAAASS</sequence>